<sequence>MERYDELKKGESGALVSIAAYLVLSAIKLIIGYLFHSEALTADGLNNTTDIIASVAVLIGLRISQKPPDEDHPYGHFRAETIASLIASFIMMVVGLQVLFSAGESIFSAKQETPDMIAAWTAAGGAVLMLIVYRYNKRLAKKVKSQALLAAAADNKSDAFVSIGTFIGIVAAQFHLAWIDTVTAFVIGLLICKTAWDIFKESSHSLTDGFDIKDISAYKQTIEKISGVSRLKDIKARYLGSTVHVDVVVEVSADLNITESHDIANEIERRMKEEHAIDYSHVHMEPLEQK</sequence>
<reference key="1">
    <citation type="journal article" date="1996" name="Microbiology">
        <title>The 52 degrees-55 degrees segment of the Bacillus subtilis chromosome: a region devoted to purine uptake and metabolism, and containing the genes cotA, gabP and guaA and the pur gene cluster within a 34960 bp nucleotide sequence.</title>
        <authorList>
            <person name="Borriss R."/>
            <person name="Porwollik S."/>
            <person name="Schroeter R."/>
        </authorList>
    </citation>
    <scope>NUCLEOTIDE SEQUENCE [GENOMIC DNA]</scope>
    <source>
        <strain>168</strain>
    </source>
</reference>
<reference key="2">
    <citation type="journal article" date="1997" name="Nature">
        <title>The complete genome sequence of the Gram-positive bacterium Bacillus subtilis.</title>
        <authorList>
            <person name="Kunst F."/>
            <person name="Ogasawara N."/>
            <person name="Moszer I."/>
            <person name="Albertini A.M."/>
            <person name="Alloni G."/>
            <person name="Azevedo V."/>
            <person name="Bertero M.G."/>
            <person name="Bessieres P."/>
            <person name="Bolotin A."/>
            <person name="Borchert S."/>
            <person name="Borriss R."/>
            <person name="Boursier L."/>
            <person name="Brans A."/>
            <person name="Braun M."/>
            <person name="Brignell S.C."/>
            <person name="Bron S."/>
            <person name="Brouillet S."/>
            <person name="Bruschi C.V."/>
            <person name="Caldwell B."/>
            <person name="Capuano V."/>
            <person name="Carter N.M."/>
            <person name="Choi S.-K."/>
            <person name="Codani J.-J."/>
            <person name="Connerton I.F."/>
            <person name="Cummings N.J."/>
            <person name="Daniel R.A."/>
            <person name="Denizot F."/>
            <person name="Devine K.M."/>
            <person name="Duesterhoeft A."/>
            <person name="Ehrlich S.D."/>
            <person name="Emmerson P.T."/>
            <person name="Entian K.-D."/>
            <person name="Errington J."/>
            <person name="Fabret C."/>
            <person name="Ferrari E."/>
            <person name="Foulger D."/>
            <person name="Fritz C."/>
            <person name="Fujita M."/>
            <person name="Fujita Y."/>
            <person name="Fuma S."/>
            <person name="Galizzi A."/>
            <person name="Galleron N."/>
            <person name="Ghim S.-Y."/>
            <person name="Glaser P."/>
            <person name="Goffeau A."/>
            <person name="Golightly E.J."/>
            <person name="Grandi G."/>
            <person name="Guiseppi G."/>
            <person name="Guy B.J."/>
            <person name="Haga K."/>
            <person name="Haiech J."/>
            <person name="Harwood C.R."/>
            <person name="Henaut A."/>
            <person name="Hilbert H."/>
            <person name="Holsappel S."/>
            <person name="Hosono S."/>
            <person name="Hullo M.-F."/>
            <person name="Itaya M."/>
            <person name="Jones L.-M."/>
            <person name="Joris B."/>
            <person name="Karamata D."/>
            <person name="Kasahara Y."/>
            <person name="Klaerr-Blanchard M."/>
            <person name="Klein C."/>
            <person name="Kobayashi Y."/>
            <person name="Koetter P."/>
            <person name="Koningstein G."/>
            <person name="Krogh S."/>
            <person name="Kumano M."/>
            <person name="Kurita K."/>
            <person name="Lapidus A."/>
            <person name="Lardinois S."/>
            <person name="Lauber J."/>
            <person name="Lazarevic V."/>
            <person name="Lee S.-M."/>
            <person name="Levine A."/>
            <person name="Liu H."/>
            <person name="Masuda S."/>
            <person name="Mauel C."/>
            <person name="Medigue C."/>
            <person name="Medina N."/>
            <person name="Mellado R.P."/>
            <person name="Mizuno M."/>
            <person name="Moestl D."/>
            <person name="Nakai S."/>
            <person name="Noback M."/>
            <person name="Noone D."/>
            <person name="O'Reilly M."/>
            <person name="Ogawa K."/>
            <person name="Ogiwara A."/>
            <person name="Oudega B."/>
            <person name="Park S.-H."/>
            <person name="Parro V."/>
            <person name="Pohl T.M."/>
            <person name="Portetelle D."/>
            <person name="Porwollik S."/>
            <person name="Prescott A.M."/>
            <person name="Presecan E."/>
            <person name="Pujic P."/>
            <person name="Purnelle B."/>
            <person name="Rapoport G."/>
            <person name="Rey M."/>
            <person name="Reynolds S."/>
            <person name="Rieger M."/>
            <person name="Rivolta C."/>
            <person name="Rocha E."/>
            <person name="Roche B."/>
            <person name="Rose M."/>
            <person name="Sadaie Y."/>
            <person name="Sato T."/>
            <person name="Scanlan E."/>
            <person name="Schleich S."/>
            <person name="Schroeter R."/>
            <person name="Scoffone F."/>
            <person name="Sekiguchi J."/>
            <person name="Sekowska A."/>
            <person name="Seror S.J."/>
            <person name="Serror P."/>
            <person name="Shin B.-S."/>
            <person name="Soldo B."/>
            <person name="Sorokin A."/>
            <person name="Tacconi E."/>
            <person name="Takagi T."/>
            <person name="Takahashi H."/>
            <person name="Takemaru K."/>
            <person name="Takeuchi M."/>
            <person name="Tamakoshi A."/>
            <person name="Tanaka T."/>
            <person name="Terpstra P."/>
            <person name="Tognoni A."/>
            <person name="Tosato V."/>
            <person name="Uchiyama S."/>
            <person name="Vandenbol M."/>
            <person name="Vannier F."/>
            <person name="Vassarotti A."/>
            <person name="Viari A."/>
            <person name="Wambutt R."/>
            <person name="Wedler E."/>
            <person name="Wedler H."/>
            <person name="Weitzenegger T."/>
            <person name="Winters P."/>
            <person name="Wipat A."/>
            <person name="Yamamoto H."/>
            <person name="Yamane K."/>
            <person name="Yasumoto K."/>
            <person name="Yata K."/>
            <person name="Yoshida K."/>
            <person name="Yoshikawa H.-F."/>
            <person name="Zumstein E."/>
            <person name="Yoshikawa H."/>
            <person name="Danchin A."/>
        </authorList>
    </citation>
    <scope>NUCLEOTIDE SEQUENCE [LARGE SCALE GENOMIC DNA]</scope>
    <source>
        <strain>168</strain>
    </source>
</reference>
<reference key="3">
    <citation type="journal article" date="1996" name="Mol. Microbiol.">
        <title>Expression of the Bacillus subtilis gabP gene is regulated independently in response to nitrogen and amino acid availability.</title>
        <authorList>
            <person name="Ferson A.E."/>
            <person name="Wray L.V. Jr."/>
            <person name="Fisher S.H."/>
        </authorList>
    </citation>
    <scope>NUCLEOTIDE SEQUENCE [GENOMIC DNA] OF 1-276</scope>
    <source>
        <strain>168</strain>
    </source>
</reference>
<reference key="4">
    <citation type="journal article" date="2017" name="Mol. Microbiol.">
        <title>Bacillus subtilis MntR coordinates the transcriptional regulation of manganese uptake and efflux systems.</title>
        <authorList>
            <person name="Huang X."/>
            <person name="Shin J.H."/>
            <person name="Pinochet-Barros A."/>
            <person name="Su T.T."/>
            <person name="Helmann J.D."/>
        </authorList>
    </citation>
    <scope>FUNCTION</scope>
    <scope>INDUCTION</scope>
    <scope>DISRUPTION PHENOTYPE</scope>
</reference>
<dbReference type="EMBL" id="U51115">
    <property type="protein sequence ID" value="AAB62307.1"/>
    <property type="molecule type" value="Genomic_DNA"/>
</dbReference>
<dbReference type="EMBL" id="AL009126">
    <property type="protein sequence ID" value="CAB12451.1"/>
    <property type="molecule type" value="Genomic_DNA"/>
</dbReference>
<dbReference type="EMBL" id="U31756">
    <property type="protein sequence ID" value="AAC44640.1"/>
    <property type="molecule type" value="Genomic_DNA"/>
</dbReference>
<dbReference type="PIR" id="B69791">
    <property type="entry name" value="B69791"/>
</dbReference>
<dbReference type="RefSeq" id="NP_388513.1">
    <property type="nucleotide sequence ID" value="NC_000964.3"/>
</dbReference>
<dbReference type="RefSeq" id="WP_003233995.1">
    <property type="nucleotide sequence ID" value="NZ_OZ025638.1"/>
</dbReference>
<dbReference type="SMR" id="P46348"/>
<dbReference type="FunCoup" id="P46348">
    <property type="interactions" value="619"/>
</dbReference>
<dbReference type="STRING" id="224308.BSU06320"/>
<dbReference type="PaxDb" id="224308-BSU06320"/>
<dbReference type="EnsemblBacteria" id="CAB12451">
    <property type="protein sequence ID" value="CAB12451"/>
    <property type="gene ID" value="BSU_06320"/>
</dbReference>
<dbReference type="GeneID" id="936032"/>
<dbReference type="KEGG" id="bsu:BSU06320"/>
<dbReference type="PATRIC" id="fig|224308.179.peg.686"/>
<dbReference type="eggNOG" id="COG0053">
    <property type="taxonomic scope" value="Bacteria"/>
</dbReference>
<dbReference type="InParanoid" id="P46348"/>
<dbReference type="OrthoDB" id="9806522at2"/>
<dbReference type="PhylomeDB" id="P46348"/>
<dbReference type="BioCyc" id="BSUB:BSU06320-MONOMER"/>
<dbReference type="Proteomes" id="UP000001570">
    <property type="component" value="Chromosome"/>
</dbReference>
<dbReference type="GO" id="GO:0016020">
    <property type="term" value="C:membrane"/>
    <property type="evidence" value="ECO:0000318"/>
    <property type="project" value="GO_Central"/>
</dbReference>
<dbReference type="GO" id="GO:0005886">
    <property type="term" value="C:plasma membrane"/>
    <property type="evidence" value="ECO:0007669"/>
    <property type="project" value="UniProtKB-SubCell"/>
</dbReference>
<dbReference type="GO" id="GO:0008324">
    <property type="term" value="F:monoatomic cation transmembrane transporter activity"/>
    <property type="evidence" value="ECO:0000318"/>
    <property type="project" value="GO_Central"/>
</dbReference>
<dbReference type="FunFam" id="3.30.70.1350:FF:000006">
    <property type="entry name" value="Cation transporter"/>
    <property type="match status" value="1"/>
</dbReference>
<dbReference type="FunFam" id="1.20.1510.10:FF:000006">
    <property type="entry name" value="Divalent cation efflux transporter"/>
    <property type="match status" value="1"/>
</dbReference>
<dbReference type="Gene3D" id="1.20.1510.10">
    <property type="entry name" value="Cation efflux protein transmembrane domain"/>
    <property type="match status" value="1"/>
</dbReference>
<dbReference type="Gene3D" id="3.30.70.1350">
    <property type="entry name" value="Cation efflux protein, cytoplasmic domain"/>
    <property type="match status" value="1"/>
</dbReference>
<dbReference type="InterPro" id="IPR002524">
    <property type="entry name" value="Cation_efflux"/>
</dbReference>
<dbReference type="InterPro" id="IPR027470">
    <property type="entry name" value="Cation_efflux_CTD"/>
</dbReference>
<dbReference type="InterPro" id="IPR036837">
    <property type="entry name" value="Cation_efflux_CTD_sf"/>
</dbReference>
<dbReference type="InterPro" id="IPR027469">
    <property type="entry name" value="Cation_efflux_TMD_sf"/>
</dbReference>
<dbReference type="InterPro" id="IPR050291">
    <property type="entry name" value="CDF_Transporter"/>
</dbReference>
<dbReference type="NCBIfam" id="TIGR01297">
    <property type="entry name" value="CDF"/>
    <property type="match status" value="1"/>
</dbReference>
<dbReference type="PANTHER" id="PTHR43840:SF50">
    <property type="entry name" value="MANGANESE EFFLUX SYSTEM PROTEIN MNES"/>
    <property type="match status" value="1"/>
</dbReference>
<dbReference type="PANTHER" id="PTHR43840">
    <property type="entry name" value="MITOCHONDRIAL METAL TRANSPORTER 1-RELATED"/>
    <property type="match status" value="1"/>
</dbReference>
<dbReference type="Pfam" id="PF01545">
    <property type="entry name" value="Cation_efflux"/>
    <property type="match status" value="1"/>
</dbReference>
<dbReference type="Pfam" id="PF16916">
    <property type="entry name" value="ZT_dimer"/>
    <property type="match status" value="1"/>
</dbReference>
<dbReference type="SUPFAM" id="SSF160240">
    <property type="entry name" value="Cation efflux protein cytoplasmic domain-like"/>
    <property type="match status" value="1"/>
</dbReference>
<dbReference type="SUPFAM" id="SSF161111">
    <property type="entry name" value="Cation efflux protein transmembrane domain-like"/>
    <property type="match status" value="1"/>
</dbReference>
<feature type="chain" id="PRO_0000206135" description="Manganese efflux system protein MneS">
    <location>
        <begin position="1"/>
        <end position="290"/>
    </location>
</feature>
<feature type="transmembrane region" description="Helical" evidence="1">
    <location>
        <begin position="15"/>
        <end position="35"/>
    </location>
</feature>
<feature type="transmembrane region" description="Helical" evidence="1">
    <location>
        <begin position="39"/>
        <end position="61"/>
    </location>
</feature>
<feature type="transmembrane region" description="Helical" evidence="1">
    <location>
        <begin position="82"/>
        <end position="102"/>
    </location>
</feature>
<feature type="transmembrane region" description="Helical" evidence="1">
    <location>
        <begin position="113"/>
        <end position="133"/>
    </location>
</feature>
<feature type="transmembrane region" description="Helical" evidence="1">
    <location>
        <begin position="159"/>
        <end position="179"/>
    </location>
</feature>
<feature type="transmembrane region" description="Helical" evidence="1">
    <location>
        <begin position="181"/>
        <end position="201"/>
    </location>
</feature>
<proteinExistence type="evidence at transcript level"/>
<keyword id="KW-1003">Cell membrane</keyword>
<keyword id="KW-0406">Ion transport</keyword>
<keyword id="KW-0472">Membrane</keyword>
<keyword id="KW-1185">Reference proteome</keyword>
<keyword id="KW-0812">Transmembrane</keyword>
<keyword id="KW-1133">Transmembrane helix</keyword>
<keyword id="KW-0813">Transport</keyword>
<evidence type="ECO:0000255" key="1"/>
<evidence type="ECO:0000269" key="2">
    <source>
    </source>
</evidence>
<evidence type="ECO:0000303" key="3">
    <source>
    </source>
</evidence>
<evidence type="ECO:0000305" key="4"/>
<organism>
    <name type="scientific">Bacillus subtilis (strain 168)</name>
    <dbReference type="NCBI Taxonomy" id="224308"/>
    <lineage>
        <taxon>Bacteria</taxon>
        <taxon>Bacillati</taxon>
        <taxon>Bacillota</taxon>
        <taxon>Bacilli</taxon>
        <taxon>Bacillales</taxon>
        <taxon>Bacillaceae</taxon>
        <taxon>Bacillus</taxon>
    </lineage>
</organism>
<protein>
    <recommendedName>
        <fullName evidence="3">Manganese efflux system protein MneS</fullName>
    </recommendedName>
</protein>
<accession>P46348</accession>
<accession>O05001</accession>
<comment type="function">
    <text evidence="2">Secondary manganese efflux system. May prevent manganese intoxication.</text>
</comment>
<comment type="subcellular location">
    <subcellularLocation>
        <location evidence="4">Cell membrane</location>
        <topology evidence="1">Multi-pass membrane protein</topology>
    </subcellularLocation>
</comment>
<comment type="induction">
    <text evidence="2">Transcriptionally activated by MntR in response to manganese excess. Expressed at a basal level in the absence of MntR.</text>
</comment>
<comment type="disruption phenotype">
    <text evidence="2">Deletion of the gene has no significant effet. However, a mneP-mneS double mutant is manganese sensitive and accumulates high levels of intracellular manganese.</text>
</comment>
<comment type="similarity">
    <text evidence="4">Belongs to the cation diffusion facilitator (CDF) transporter (TC 2.A.4) family.</text>
</comment>
<gene>
    <name evidence="3" type="primary">mneS</name>
    <name type="synonym">ydxT</name>
    <name type="synonym">yeaB</name>
    <name type="ordered locus">BSU06320</name>
</gene>
<name>MNES_BACSU</name>